<evidence type="ECO:0000250" key="1">
    <source>
        <dbReference type="UniProtKB" id="P62851"/>
    </source>
</evidence>
<evidence type="ECO:0000250" key="2">
    <source>
        <dbReference type="UniProtKB" id="P62852"/>
    </source>
</evidence>
<evidence type="ECO:0000256" key="3">
    <source>
        <dbReference type="SAM" id="MobiDB-lite"/>
    </source>
</evidence>
<evidence type="ECO:0000305" key="4"/>
<organism>
    <name type="scientific">Ovis aries</name>
    <name type="common">Sheep</name>
    <dbReference type="NCBI Taxonomy" id="9940"/>
    <lineage>
        <taxon>Eukaryota</taxon>
        <taxon>Metazoa</taxon>
        <taxon>Chordata</taxon>
        <taxon>Craniata</taxon>
        <taxon>Vertebrata</taxon>
        <taxon>Euteleostomi</taxon>
        <taxon>Mammalia</taxon>
        <taxon>Eutheria</taxon>
        <taxon>Laurasiatheria</taxon>
        <taxon>Artiodactyla</taxon>
        <taxon>Ruminantia</taxon>
        <taxon>Pecora</taxon>
        <taxon>Bovidae</taxon>
        <taxon>Caprinae</taxon>
        <taxon>Ovis</taxon>
    </lineage>
</organism>
<dbReference type="EMBL" id="AY563025">
    <property type="protein sequence ID" value="AAS72378.1"/>
    <property type="molecule type" value="mRNA"/>
</dbReference>
<dbReference type="EMBL" id="DQ223561">
    <property type="protein sequence ID" value="ABB46364.1"/>
    <property type="molecule type" value="mRNA"/>
</dbReference>
<dbReference type="RefSeq" id="NP_001009457.1">
    <property type="nucleotide sequence ID" value="NM_001009457.1"/>
</dbReference>
<dbReference type="RefSeq" id="XP_004008884.1">
    <property type="nucleotide sequence ID" value="XM_004008835.3"/>
</dbReference>
<dbReference type="SMR" id="Q6Q311"/>
<dbReference type="IntAct" id="Q6Q311">
    <property type="interactions" value="2"/>
</dbReference>
<dbReference type="MINT" id="Q6Q311"/>
<dbReference type="STRING" id="9940.ENSOARP00000013086"/>
<dbReference type="PaxDb" id="9940-ENSOARP00000013086"/>
<dbReference type="Ensembl" id="ENSOART00180020503">
    <property type="protein sequence ID" value="ENSOARP00180010516"/>
    <property type="gene ID" value="ENSOARG00180012539"/>
</dbReference>
<dbReference type="Ensembl" id="ENSOART00185024235">
    <property type="protein sequence ID" value="ENSOARP00185011141"/>
    <property type="gene ID" value="ENSOARG00185015024"/>
</dbReference>
<dbReference type="Ensembl" id="ENSOART00185025827">
    <property type="protein sequence ID" value="ENSOARP00185011849"/>
    <property type="gene ID" value="ENSOARG00185016017"/>
</dbReference>
<dbReference type="Ensembl" id="ENSOART00215022964">
    <property type="protein sequence ID" value="ENSOARP00215011558"/>
    <property type="gene ID" value="ENSOARG00215013871"/>
</dbReference>
<dbReference type="Ensembl" id="ENSOART00215050137">
    <property type="protein sequence ID" value="ENSOARP00215026035"/>
    <property type="gene ID" value="ENSOARG00215029996"/>
</dbReference>
<dbReference type="Ensembl" id="ENSOART00215095922">
    <property type="protein sequence ID" value="ENSOARP00215051882"/>
    <property type="gene ID" value="ENSOARG00215057125"/>
</dbReference>
<dbReference type="Ensembl" id="ENSOART00220029357">
    <property type="protein sequence ID" value="ENSOARP00220016186"/>
    <property type="gene ID" value="ENSOARG00220017571"/>
</dbReference>
<dbReference type="Ensembl" id="ENSOART00220029372">
    <property type="protein sequence ID" value="ENSOARP00220016199"/>
    <property type="gene ID" value="ENSOARG00220017571"/>
</dbReference>
<dbReference type="Ensembl" id="ENSOART00220096642">
    <property type="protein sequence ID" value="ENSOARP00220050713"/>
    <property type="gene ID" value="ENSOARG00220058516"/>
</dbReference>
<dbReference type="Ensembl" id="ENSOART00225027125">
    <property type="protein sequence ID" value="ENSOARP00225012977"/>
    <property type="gene ID" value="ENSOARG00225016649"/>
</dbReference>
<dbReference type="Ensembl" id="ENSOART00225070144">
    <property type="protein sequence ID" value="ENSOARP00225035634"/>
    <property type="gene ID" value="ENSOARG00225042376"/>
</dbReference>
<dbReference type="Ensembl" id="ENSOART00225070148">
    <property type="protein sequence ID" value="ENSOARP00225035635"/>
    <property type="gene ID" value="ENSOARG00225042376"/>
</dbReference>
<dbReference type="Ensembl" id="ENSOART00225085957">
    <property type="protein sequence ID" value="ENSOARP00225044905"/>
    <property type="gene ID" value="ENSOARG00225051619"/>
</dbReference>
<dbReference type="GeneID" id="443521"/>
<dbReference type="KEGG" id="oas:443521"/>
<dbReference type="CTD" id="6230"/>
<dbReference type="eggNOG" id="KOG1767">
    <property type="taxonomic scope" value="Eukaryota"/>
</dbReference>
<dbReference type="OrthoDB" id="9580478at2759"/>
<dbReference type="Proteomes" id="UP000002356">
    <property type="component" value="Unplaced"/>
</dbReference>
<dbReference type="GO" id="GO:0005737">
    <property type="term" value="C:cytoplasm"/>
    <property type="evidence" value="ECO:0007669"/>
    <property type="project" value="UniProtKB-SubCell"/>
</dbReference>
<dbReference type="GO" id="GO:1990904">
    <property type="term" value="C:ribonucleoprotein complex"/>
    <property type="evidence" value="ECO:0007669"/>
    <property type="project" value="UniProtKB-KW"/>
</dbReference>
<dbReference type="GO" id="GO:0005840">
    <property type="term" value="C:ribosome"/>
    <property type="evidence" value="ECO:0007669"/>
    <property type="project" value="UniProtKB-KW"/>
</dbReference>
<dbReference type="FunFam" id="1.10.10.10:FF:000166">
    <property type="entry name" value="40S ribosomal protein S25"/>
    <property type="match status" value="1"/>
</dbReference>
<dbReference type="Gene3D" id="1.10.10.10">
    <property type="entry name" value="Winged helix-like DNA-binding domain superfamily/Winged helix DNA-binding domain"/>
    <property type="match status" value="1"/>
</dbReference>
<dbReference type="InterPro" id="IPR004977">
    <property type="entry name" value="Ribosomal_eS25"/>
</dbReference>
<dbReference type="InterPro" id="IPR036388">
    <property type="entry name" value="WH-like_DNA-bd_sf"/>
</dbReference>
<dbReference type="PANTHER" id="PTHR12850">
    <property type="entry name" value="40S RIBOSOMAL PROTEIN S25"/>
    <property type="match status" value="1"/>
</dbReference>
<dbReference type="Pfam" id="PF03297">
    <property type="entry name" value="Ribosomal_S25"/>
    <property type="match status" value="1"/>
</dbReference>
<comment type="function">
    <text evidence="1">Component of the small ribosomal subunit. The ribosome is a large ribonucleoprotein complex responsible for the synthesis of proteins in the cell.</text>
</comment>
<comment type="subunit">
    <text evidence="1">Component of the small ribosomal subunit.</text>
</comment>
<comment type="subcellular location">
    <subcellularLocation>
        <location evidence="1">Cytoplasm</location>
    </subcellularLocation>
</comment>
<comment type="similarity">
    <text evidence="4">Belongs to the eukaryotic ribosomal protein eS25 family.</text>
</comment>
<protein>
    <recommendedName>
        <fullName evidence="4">Small ribosomal subunit protein eS25</fullName>
    </recommendedName>
    <alternativeName>
        <fullName>40S ribosomal protein S25</fullName>
    </alternativeName>
</protein>
<keyword id="KW-0007">Acetylation</keyword>
<keyword id="KW-0963">Cytoplasm</keyword>
<keyword id="KW-1185">Reference proteome</keyword>
<keyword id="KW-0687">Ribonucleoprotein</keyword>
<keyword id="KW-0689">Ribosomal protein</keyword>
<gene>
    <name type="primary">RPS25</name>
</gene>
<reference key="1">
    <citation type="submission" date="2004-03" db="EMBL/GenBank/DDBJ databases">
        <title>Yeast two hybrid screen of sheep endometrium cDNA library.</title>
        <authorList>
            <person name="Wang S.-Z."/>
            <person name="Roberts R.M."/>
        </authorList>
    </citation>
    <scope>NUCLEOTIDE SEQUENCE [MRNA]</scope>
</reference>
<reference key="2">
    <citation type="journal article" date="2006" name="Physiol. Genomics">
        <title>Gene expression profiling during increased fetal lung expansion identifies genes likely to regulate development of the distal airways.</title>
        <authorList>
            <person name="Sozo F."/>
            <person name="Wallace M.J."/>
            <person name="Zahra V.A."/>
            <person name="Filby C.E."/>
            <person name="Hooper S.B."/>
        </authorList>
    </citation>
    <scope>NUCLEOTIDE SEQUENCE [MRNA]</scope>
    <source>
        <tissue>Lung</tissue>
    </source>
</reference>
<feature type="chain" id="PRO_0000192872" description="Small ribosomal subunit protein eS25">
    <location>
        <begin position="1"/>
        <end position="125"/>
    </location>
</feature>
<feature type="region of interest" description="Disordered" evidence="3">
    <location>
        <begin position="1"/>
        <end position="38"/>
    </location>
</feature>
<feature type="compositionally biased region" description="Basic and acidic residues" evidence="3">
    <location>
        <begin position="1"/>
        <end position="23"/>
    </location>
</feature>
<feature type="compositionally biased region" description="Basic residues" evidence="3">
    <location>
        <begin position="28"/>
        <end position="38"/>
    </location>
</feature>
<feature type="modified residue" description="N6-acetyllysine" evidence="2">
    <location>
        <position position="43"/>
    </location>
</feature>
<feature type="modified residue" description="N6-acetyllysine; alternate" evidence="1">
    <location>
        <position position="52"/>
    </location>
</feature>
<feature type="modified residue" description="N6-succinyllysine; alternate" evidence="2">
    <location>
        <position position="52"/>
    </location>
</feature>
<feature type="modified residue" description="N6-acetyllysine" evidence="1">
    <location>
        <position position="60"/>
    </location>
</feature>
<feature type="modified residue" description="N6-acetyllysine" evidence="1">
    <location>
        <position position="66"/>
    </location>
</feature>
<feature type="modified residue" description="N6-acetyllysine; alternate" evidence="1">
    <location>
        <position position="94"/>
    </location>
</feature>
<feature type="modified residue" description="N6-succinyllysine; alternate" evidence="2">
    <location>
        <position position="94"/>
    </location>
</feature>
<feature type="sequence conflict" description="In Ref. 2; ABB46364." evidence="4" ref="2">
    <original>F</original>
    <variation>S</variation>
    <location>
        <position position="50"/>
    </location>
</feature>
<accession>Q6Q311</accession>
<accession>Q30B78</accession>
<proteinExistence type="evidence at transcript level"/>
<name>RS25_SHEEP</name>
<sequence length="125" mass="13742">MPPKDDKKKKDAGKSAKKDKDPVNKSGGKAKKKKWSKGKVRDKLNNLVLFDKATYDKLCKEVPNYKLITPAVVSERLKIRGSLARAALQELLSKGLIKLVSKHRAQVIYTRNTKGGDAPAAGEDA</sequence>